<name>FIB_STAAM</name>
<protein>
    <recommendedName>
        <fullName>Fibrinogen-binding protein</fullName>
    </recommendedName>
</protein>
<evidence type="ECO:0000250" key="1"/>
<evidence type="ECO:0000250" key="2">
    <source>
        <dbReference type="UniProtKB" id="A6QG59"/>
    </source>
</evidence>
<evidence type="ECO:0007829" key="3">
    <source>
        <dbReference type="PDB" id="2GOM"/>
    </source>
</evidence>
<keyword id="KW-0002">3D-structure</keyword>
<keyword id="KW-0964">Secreted</keyword>
<keyword id="KW-0732">Signal</keyword>
<keyword id="KW-0843">Virulence</keyword>
<dbReference type="EMBL" id="BA000017">
    <property type="protein sequence ID" value="BAB57320.1"/>
    <property type="molecule type" value="Genomic_DNA"/>
</dbReference>
<dbReference type="RefSeq" id="WP_000791581.1">
    <property type="nucleotide sequence ID" value="NC_002758.2"/>
</dbReference>
<dbReference type="PDB" id="2GOM">
    <property type="method" value="X-ray"/>
    <property type="resolution" value="1.25 A"/>
    <property type="chains" value="A/B=105-165"/>
</dbReference>
<dbReference type="PDB" id="2GOX">
    <property type="method" value="X-ray"/>
    <property type="resolution" value="2.20 A"/>
    <property type="chains" value="B/D=101-165"/>
</dbReference>
<dbReference type="PDBsum" id="2GOM"/>
<dbReference type="PDBsum" id="2GOX"/>
<dbReference type="SMR" id="P68799"/>
<dbReference type="KEGG" id="sav:SAV1158"/>
<dbReference type="HOGENOM" id="CLU_136810_0_0_9"/>
<dbReference type="EvolutionaryTrace" id="P68799"/>
<dbReference type="PRO" id="PR:P68799"/>
<dbReference type="Proteomes" id="UP000002481">
    <property type="component" value="Chromosome"/>
</dbReference>
<dbReference type="GO" id="GO:0005615">
    <property type="term" value="C:extracellular space"/>
    <property type="evidence" value="ECO:0007669"/>
    <property type="project" value="InterPro"/>
</dbReference>
<dbReference type="GO" id="GO:0001848">
    <property type="term" value="F:complement binding"/>
    <property type="evidence" value="ECO:0007669"/>
    <property type="project" value="InterPro"/>
</dbReference>
<dbReference type="FunFam" id="1.10.10.1270:FF:000001">
    <property type="entry name" value="Fibrinogen-binding protein"/>
    <property type="match status" value="1"/>
</dbReference>
<dbReference type="Gene3D" id="1.10.10.1270">
    <property type="entry name" value="Sbi, C3 binding domain IV"/>
    <property type="match status" value="1"/>
</dbReference>
<dbReference type="InterPro" id="IPR036233">
    <property type="entry name" value="Efb_C_sf"/>
</dbReference>
<dbReference type="InterPro" id="IPR021033">
    <property type="entry name" value="Extracellular_fibrinogen-bd_C"/>
</dbReference>
<dbReference type="InterPro" id="IPR041909">
    <property type="entry name" value="Sbi_C3_db_domIV"/>
</dbReference>
<dbReference type="Pfam" id="PF12199">
    <property type="entry name" value="efb-c"/>
    <property type="match status" value="1"/>
</dbReference>
<dbReference type="SUPFAM" id="SSF158366">
    <property type="entry name" value="Efb C-domain-like"/>
    <property type="match status" value="1"/>
</dbReference>
<sequence>MKNKLIAKSLLTIAAIGITTTTIASTADASEGYGPREKKPVSINHNIVEYNDGTFKYQSRPKFNSTPKYIKFKHDYNILEFNDGTFEYGARPQFNKPAAKTDATIKKEQKLIQAQNLVREFEKTHTVSAHRKAQKAVNLVSFEYKVKKMVLQERIDNVLKQGLVR</sequence>
<organism>
    <name type="scientific">Staphylococcus aureus (strain Mu50 / ATCC 700699)</name>
    <dbReference type="NCBI Taxonomy" id="158878"/>
    <lineage>
        <taxon>Bacteria</taxon>
        <taxon>Bacillati</taxon>
        <taxon>Bacillota</taxon>
        <taxon>Bacilli</taxon>
        <taxon>Bacillales</taxon>
        <taxon>Staphylococcaceae</taxon>
        <taxon>Staphylococcus</taxon>
    </lineage>
</organism>
<accession>P68799</accession>
<accession>Q08691</accession>
<feature type="signal peptide" evidence="1">
    <location>
        <begin position="1"/>
        <end position="29"/>
    </location>
</feature>
<feature type="chain" id="PRO_0000021258" description="Fibrinogen-binding protein">
    <location>
        <begin position="30"/>
        <end position="165"/>
    </location>
</feature>
<feature type="helix" evidence="3">
    <location>
        <begin position="106"/>
        <end position="124"/>
    </location>
</feature>
<feature type="helix" evidence="3">
    <location>
        <begin position="127"/>
        <end position="139"/>
    </location>
</feature>
<feature type="helix" evidence="3">
    <location>
        <begin position="142"/>
        <end position="144"/>
    </location>
</feature>
<feature type="helix" evidence="3">
    <location>
        <begin position="145"/>
        <end position="161"/>
    </location>
</feature>
<reference key="1">
    <citation type="journal article" date="2001" name="Lancet">
        <title>Whole genome sequencing of meticillin-resistant Staphylococcus aureus.</title>
        <authorList>
            <person name="Kuroda M."/>
            <person name="Ohta T."/>
            <person name="Uchiyama I."/>
            <person name="Baba T."/>
            <person name="Yuzawa H."/>
            <person name="Kobayashi I."/>
            <person name="Cui L."/>
            <person name="Oguchi A."/>
            <person name="Aoki K."/>
            <person name="Nagai Y."/>
            <person name="Lian J.-Q."/>
            <person name="Ito T."/>
            <person name="Kanamori M."/>
            <person name="Matsumaru H."/>
            <person name="Maruyama A."/>
            <person name="Murakami H."/>
            <person name="Hosoyama A."/>
            <person name="Mizutani-Ui Y."/>
            <person name="Takahashi N.K."/>
            <person name="Sawano T."/>
            <person name="Inoue R."/>
            <person name="Kaito C."/>
            <person name="Sekimizu K."/>
            <person name="Hirakawa H."/>
            <person name="Kuhara S."/>
            <person name="Goto S."/>
            <person name="Yabuzaki J."/>
            <person name="Kanehisa M."/>
            <person name="Yamashita A."/>
            <person name="Oshima K."/>
            <person name="Furuya K."/>
            <person name="Yoshino C."/>
            <person name="Shiba T."/>
            <person name="Hattori M."/>
            <person name="Ogasawara N."/>
            <person name="Hayashi H."/>
            <person name="Hiramatsu K."/>
        </authorList>
    </citation>
    <scope>NUCLEOTIDE SEQUENCE [LARGE SCALE GENOMIC DNA]</scope>
    <source>
        <strain>Mu50 / ATCC 700699</strain>
    </source>
</reference>
<reference key="2">
    <citation type="journal article" date="2007" name="Nat. Immunol.">
        <title>A structural basis for complement inhibition by Staphylococcus aureus.</title>
        <authorList>
            <person name="Hammel M."/>
            <person name="Sfyroera G."/>
            <person name="Ricklin D."/>
            <person name="Magotti P."/>
            <person name="Lambris J.D."/>
            <person name="Geisbrecht B.V."/>
        </authorList>
    </citation>
    <scope>X-RAY CRYSTALLOGRAPHY (1.25 ANGSTROMS) OF 105-165 AND OF 101-165 IN COMPLEX WITH C3D DOMAIN OF HUMAN COMPLEMENT C3 PROTEIN</scope>
</reference>
<gene>
    <name type="primary">fib</name>
    <name type="synonym">efb</name>
    <name type="ordered locus">SAV1158</name>
</gene>
<proteinExistence type="evidence at protein level"/>
<comment type="function">
    <text evidence="2">Extracellular fibrinogen-binding protein that plays an important role in virulence. By interacting with the alpha chain of fibrinogen and its derivative fibrin, enhances a non-functional interaction between fibrinogen and platelets and is responsible for repression of fibrinogen-dependent platelet aggregation. In addition, assembles a fibrinogen protective shield around the bacteria which results in impaired phagocytic clearance by the host. Mechanistically, interacts with host complement C3b deposited on the surface of the bacterium via its C-terminal and then recruits fibrinogen via its N-terminal.</text>
</comment>
<comment type="subunit">
    <text evidence="2">Interacts with host fibrinogen alpha chain/FGA. Interacts with host complement protein C3.</text>
</comment>
<comment type="subcellular location">
    <subcellularLocation>
        <location evidence="2">Secreted</location>
    </subcellularLocation>
</comment>